<gene>
    <name evidence="1" type="primary">adk</name>
    <name type="ordered locus">SAV_4947</name>
</gene>
<comment type="function">
    <text evidence="1">Catalyzes the reversible transfer of the terminal phosphate group between ATP and AMP. Plays an important role in cellular energy homeostasis and in adenine nucleotide metabolism.</text>
</comment>
<comment type="catalytic activity">
    <reaction evidence="1">
        <text>AMP + ATP = 2 ADP</text>
        <dbReference type="Rhea" id="RHEA:12973"/>
        <dbReference type="ChEBI" id="CHEBI:30616"/>
        <dbReference type="ChEBI" id="CHEBI:456215"/>
        <dbReference type="ChEBI" id="CHEBI:456216"/>
        <dbReference type="EC" id="2.7.4.3"/>
    </reaction>
</comment>
<comment type="pathway">
    <text evidence="1">Purine metabolism; AMP biosynthesis via salvage pathway; AMP from ADP: step 1/1.</text>
</comment>
<comment type="subunit">
    <text evidence="1">Monomer.</text>
</comment>
<comment type="subcellular location">
    <subcellularLocation>
        <location evidence="1">Cytoplasm</location>
    </subcellularLocation>
</comment>
<comment type="domain">
    <text evidence="1">Consists of three domains, a large central CORE domain and two small peripheral domains, NMPbind and LID, which undergo movements during catalysis. The LID domain closes over the site of phosphoryl transfer upon ATP binding. Assembling and dissambling the active center during each catalytic cycle provides an effective means to prevent ATP hydrolysis.</text>
</comment>
<comment type="similarity">
    <text evidence="1">Belongs to the adenylate kinase family.</text>
</comment>
<reference key="1">
    <citation type="journal article" date="2001" name="Proc. Natl. Acad. Sci. U.S.A.">
        <title>Genome sequence of an industrial microorganism Streptomyces avermitilis: deducing the ability of producing secondary metabolites.</title>
        <authorList>
            <person name="Omura S."/>
            <person name="Ikeda H."/>
            <person name="Ishikawa J."/>
            <person name="Hanamoto A."/>
            <person name="Takahashi C."/>
            <person name="Shinose M."/>
            <person name="Takahashi Y."/>
            <person name="Horikawa H."/>
            <person name="Nakazawa H."/>
            <person name="Osonoe T."/>
            <person name="Kikuchi H."/>
            <person name="Shiba T."/>
            <person name="Sakaki Y."/>
            <person name="Hattori M."/>
        </authorList>
    </citation>
    <scope>NUCLEOTIDE SEQUENCE [LARGE SCALE GENOMIC DNA]</scope>
    <source>
        <strain>ATCC 31267 / DSM 46492 / JCM 5070 / NBRC 14893 / NCIMB 12804 / NRRL 8165 / MA-4680</strain>
    </source>
</reference>
<reference key="2">
    <citation type="journal article" date="2003" name="Nat. Biotechnol.">
        <title>Complete genome sequence and comparative analysis of the industrial microorganism Streptomyces avermitilis.</title>
        <authorList>
            <person name="Ikeda H."/>
            <person name="Ishikawa J."/>
            <person name="Hanamoto A."/>
            <person name="Shinose M."/>
            <person name="Kikuchi H."/>
            <person name="Shiba T."/>
            <person name="Sakaki Y."/>
            <person name="Hattori M."/>
            <person name="Omura S."/>
        </authorList>
    </citation>
    <scope>NUCLEOTIDE SEQUENCE [LARGE SCALE GENOMIC DNA]</scope>
    <source>
        <strain>ATCC 31267 / DSM 46492 / JCM 5070 / NBRC 14893 / NCIMB 12804 / NRRL 8165 / MA-4680</strain>
    </source>
</reference>
<name>KAD_STRAW</name>
<feature type="chain" id="PRO_0000158855" description="Adenylate kinase">
    <location>
        <begin position="1"/>
        <end position="220"/>
    </location>
</feature>
<feature type="region of interest" description="NMP" evidence="1">
    <location>
        <begin position="30"/>
        <end position="59"/>
    </location>
</feature>
<feature type="region of interest" description="LID" evidence="1">
    <location>
        <begin position="126"/>
        <end position="164"/>
    </location>
</feature>
<feature type="binding site" evidence="1">
    <location>
        <begin position="10"/>
        <end position="15"/>
    </location>
    <ligand>
        <name>ATP</name>
        <dbReference type="ChEBI" id="CHEBI:30616"/>
    </ligand>
</feature>
<feature type="binding site" evidence="1">
    <location>
        <position position="31"/>
    </location>
    <ligand>
        <name>AMP</name>
        <dbReference type="ChEBI" id="CHEBI:456215"/>
    </ligand>
</feature>
<feature type="binding site" evidence="1">
    <location>
        <position position="36"/>
    </location>
    <ligand>
        <name>AMP</name>
        <dbReference type="ChEBI" id="CHEBI:456215"/>
    </ligand>
</feature>
<feature type="binding site" evidence="1">
    <location>
        <begin position="57"/>
        <end position="59"/>
    </location>
    <ligand>
        <name>AMP</name>
        <dbReference type="ChEBI" id="CHEBI:456215"/>
    </ligand>
</feature>
<feature type="binding site" evidence="1">
    <location>
        <begin position="85"/>
        <end position="88"/>
    </location>
    <ligand>
        <name>AMP</name>
        <dbReference type="ChEBI" id="CHEBI:456215"/>
    </ligand>
</feature>
<feature type="binding site" evidence="1">
    <location>
        <position position="92"/>
    </location>
    <ligand>
        <name>AMP</name>
        <dbReference type="ChEBI" id="CHEBI:456215"/>
    </ligand>
</feature>
<feature type="binding site" evidence="1">
    <location>
        <position position="127"/>
    </location>
    <ligand>
        <name>ATP</name>
        <dbReference type="ChEBI" id="CHEBI:30616"/>
    </ligand>
</feature>
<feature type="binding site" evidence="1">
    <location>
        <begin position="137"/>
        <end position="138"/>
    </location>
    <ligand>
        <name>ATP</name>
        <dbReference type="ChEBI" id="CHEBI:30616"/>
    </ligand>
</feature>
<feature type="binding site" evidence="1">
    <location>
        <position position="161"/>
    </location>
    <ligand>
        <name>AMP</name>
        <dbReference type="ChEBI" id="CHEBI:456215"/>
    </ligand>
</feature>
<feature type="binding site" evidence="1">
    <location>
        <position position="172"/>
    </location>
    <ligand>
        <name>AMP</name>
        <dbReference type="ChEBI" id="CHEBI:456215"/>
    </ligand>
</feature>
<feature type="binding site" evidence="1">
    <location>
        <position position="200"/>
    </location>
    <ligand>
        <name>ATP</name>
        <dbReference type="ChEBI" id="CHEBI:30616"/>
    </ligand>
</feature>
<evidence type="ECO:0000255" key="1">
    <source>
        <dbReference type="HAMAP-Rule" id="MF_00235"/>
    </source>
</evidence>
<keyword id="KW-0067">ATP-binding</keyword>
<keyword id="KW-0963">Cytoplasm</keyword>
<keyword id="KW-0418">Kinase</keyword>
<keyword id="KW-0545">Nucleotide biosynthesis</keyword>
<keyword id="KW-0547">Nucleotide-binding</keyword>
<keyword id="KW-1185">Reference proteome</keyword>
<keyword id="KW-0808">Transferase</keyword>
<proteinExistence type="inferred from homology"/>
<accession>Q82DM5</accession>
<sequence>MRIVLVGPPGAGKGTQAAFLAKNLGIPHISTGDLFRANISQQTELGKLAKSYMDEGNLVPDEVTIAMAKDRMEQPDAVNGFLLDGFPRNVKQAEALDEMLKSEGMKLDAVLDLEVPEDEVVKRIAGRRICRNDSAHVFHVSYKPPKQEGVCDVCGGELYQRDDDSEETVRRRLEVYHTQTEPIIDYYRAQGLVVTISALGPVEEVTQRAMDALKREDASK</sequence>
<dbReference type="EC" id="2.7.4.3" evidence="1"/>
<dbReference type="EMBL" id="BA000030">
    <property type="protein sequence ID" value="BAC72659.1"/>
    <property type="molecule type" value="Genomic_DNA"/>
</dbReference>
<dbReference type="RefSeq" id="WP_010986357.1">
    <property type="nucleotide sequence ID" value="NZ_JZJK01000077.1"/>
</dbReference>
<dbReference type="SMR" id="Q82DM5"/>
<dbReference type="GeneID" id="41542030"/>
<dbReference type="KEGG" id="sma:SAVERM_4947"/>
<dbReference type="eggNOG" id="COG0563">
    <property type="taxonomic scope" value="Bacteria"/>
</dbReference>
<dbReference type="HOGENOM" id="CLU_032354_1_2_11"/>
<dbReference type="OrthoDB" id="9805030at2"/>
<dbReference type="UniPathway" id="UPA00588">
    <property type="reaction ID" value="UER00649"/>
</dbReference>
<dbReference type="Proteomes" id="UP000000428">
    <property type="component" value="Chromosome"/>
</dbReference>
<dbReference type="GO" id="GO:0005737">
    <property type="term" value="C:cytoplasm"/>
    <property type="evidence" value="ECO:0007669"/>
    <property type="project" value="UniProtKB-SubCell"/>
</dbReference>
<dbReference type="GO" id="GO:0004017">
    <property type="term" value="F:adenylate kinase activity"/>
    <property type="evidence" value="ECO:0007669"/>
    <property type="project" value="UniProtKB-UniRule"/>
</dbReference>
<dbReference type="GO" id="GO:0005524">
    <property type="term" value="F:ATP binding"/>
    <property type="evidence" value="ECO:0007669"/>
    <property type="project" value="UniProtKB-UniRule"/>
</dbReference>
<dbReference type="GO" id="GO:0044209">
    <property type="term" value="P:AMP salvage"/>
    <property type="evidence" value="ECO:0007669"/>
    <property type="project" value="UniProtKB-UniRule"/>
</dbReference>
<dbReference type="CDD" id="cd01428">
    <property type="entry name" value="ADK"/>
    <property type="match status" value="1"/>
</dbReference>
<dbReference type="FunFam" id="3.40.50.300:FF:000106">
    <property type="entry name" value="Adenylate kinase mitochondrial"/>
    <property type="match status" value="1"/>
</dbReference>
<dbReference type="Gene3D" id="3.40.50.300">
    <property type="entry name" value="P-loop containing nucleotide triphosphate hydrolases"/>
    <property type="match status" value="1"/>
</dbReference>
<dbReference type="HAMAP" id="MF_00235">
    <property type="entry name" value="Adenylate_kinase_Adk"/>
    <property type="match status" value="1"/>
</dbReference>
<dbReference type="InterPro" id="IPR006259">
    <property type="entry name" value="Adenyl_kin_sub"/>
</dbReference>
<dbReference type="InterPro" id="IPR000850">
    <property type="entry name" value="Adenylat/UMP-CMP_kin"/>
</dbReference>
<dbReference type="InterPro" id="IPR033690">
    <property type="entry name" value="Adenylat_kinase_CS"/>
</dbReference>
<dbReference type="InterPro" id="IPR007862">
    <property type="entry name" value="Adenylate_kinase_lid-dom"/>
</dbReference>
<dbReference type="InterPro" id="IPR027417">
    <property type="entry name" value="P-loop_NTPase"/>
</dbReference>
<dbReference type="NCBIfam" id="TIGR01351">
    <property type="entry name" value="adk"/>
    <property type="match status" value="1"/>
</dbReference>
<dbReference type="NCBIfam" id="NF001380">
    <property type="entry name" value="PRK00279.1-2"/>
    <property type="match status" value="1"/>
</dbReference>
<dbReference type="NCBIfam" id="NF001381">
    <property type="entry name" value="PRK00279.1-3"/>
    <property type="match status" value="1"/>
</dbReference>
<dbReference type="NCBIfam" id="NF011100">
    <property type="entry name" value="PRK14527.1"/>
    <property type="match status" value="1"/>
</dbReference>
<dbReference type="PANTHER" id="PTHR23359">
    <property type="entry name" value="NUCLEOTIDE KINASE"/>
    <property type="match status" value="1"/>
</dbReference>
<dbReference type="Pfam" id="PF00406">
    <property type="entry name" value="ADK"/>
    <property type="match status" value="1"/>
</dbReference>
<dbReference type="Pfam" id="PF05191">
    <property type="entry name" value="ADK_lid"/>
    <property type="match status" value="1"/>
</dbReference>
<dbReference type="PRINTS" id="PR00094">
    <property type="entry name" value="ADENYLTKNASE"/>
</dbReference>
<dbReference type="SUPFAM" id="SSF52540">
    <property type="entry name" value="P-loop containing nucleoside triphosphate hydrolases"/>
    <property type="match status" value="1"/>
</dbReference>
<dbReference type="PROSITE" id="PS00113">
    <property type="entry name" value="ADENYLATE_KINASE"/>
    <property type="match status" value="1"/>
</dbReference>
<protein>
    <recommendedName>
        <fullName evidence="1">Adenylate kinase</fullName>
        <shortName evidence="1">AK</shortName>
        <ecNumber evidence="1">2.7.4.3</ecNumber>
    </recommendedName>
    <alternativeName>
        <fullName evidence="1">ATP-AMP transphosphorylase</fullName>
    </alternativeName>
    <alternativeName>
        <fullName evidence="1">ATP:AMP phosphotransferase</fullName>
    </alternativeName>
    <alternativeName>
        <fullName evidence="1">Adenylate monophosphate kinase</fullName>
    </alternativeName>
</protein>
<organism>
    <name type="scientific">Streptomyces avermitilis (strain ATCC 31267 / DSM 46492 / JCM 5070 / NBRC 14893 / NCIMB 12804 / NRRL 8165 / MA-4680)</name>
    <dbReference type="NCBI Taxonomy" id="227882"/>
    <lineage>
        <taxon>Bacteria</taxon>
        <taxon>Bacillati</taxon>
        <taxon>Actinomycetota</taxon>
        <taxon>Actinomycetes</taxon>
        <taxon>Kitasatosporales</taxon>
        <taxon>Streptomycetaceae</taxon>
        <taxon>Streptomyces</taxon>
    </lineage>
</organism>